<accession>Q4R380</accession>
<name>DPOLL_MACFA</name>
<keyword id="KW-0227">DNA damage</keyword>
<keyword id="KW-0234">DNA repair</keyword>
<keyword id="KW-0235">DNA replication</keyword>
<keyword id="KW-0237">DNA synthesis</keyword>
<keyword id="KW-0238">DNA-binding</keyword>
<keyword id="KW-0239">DNA-directed DNA polymerase</keyword>
<keyword id="KW-0456">Lyase</keyword>
<keyword id="KW-0464">Manganese</keyword>
<keyword id="KW-0479">Metal-binding</keyword>
<keyword id="KW-0548">Nucleotidyltransferase</keyword>
<keyword id="KW-0539">Nucleus</keyword>
<keyword id="KW-1185">Reference proteome</keyword>
<keyword id="KW-0808">Transferase</keyword>
<reference key="1">
    <citation type="submission" date="2005-06" db="EMBL/GenBank/DDBJ databases">
        <title>DNA sequences of macaque genes expressed in brain or testis and its evolutionary implications.</title>
        <authorList>
            <consortium name="International consortium for macaque cDNA sequencing and analysis"/>
        </authorList>
    </citation>
    <scope>NUCLEOTIDE SEQUENCE [LARGE SCALE MRNA]</scope>
    <source>
        <tissue>Testis</tissue>
    </source>
</reference>
<gene>
    <name evidence="2" type="primary">POLL</name>
    <name evidence="6" type="ORF">QtsA-18827</name>
</gene>
<sequence length="575" mass="63565">MDPRGILKAFPKRKKIHADASSKVLAKIPRKEEGEEAEEWLSSLRAHVVRTGIGRARAELFEKQIVQHGGQLCPVQGPGVTHIVVDEGMDYERALRLLRLPRLPPGAQLVKSAWLSLCLQERRLVDVAGFSIFIPSKYLDQSQPSKAEQDASLPPGTHEALLQTALPPPPSPTRPVSPPQKTKEAPNTQAQPISDDEASDGEETQVSAADLEALISGHYPASLEGDCDPSPAPVVLDKWVCAQPSSQKATNHNLHITEKLEVLAKAYSVQGDKWRALGYAKAINALKSFHKPVTSYQEACSIPGIGKRMAEKIIEILESGHLRKLDHISESVPVLELFSNIWGAGTKTAQMWYQQGFRSLEDIRSQASLTTQQAIGLKHYNDFLERMPREEATEIEQTVQKAAQAFNSGLLCVACGSYRRGKATCGDVDVLITHPDGRSHRGIFSRLLDSLRQQGFLTDDLVSQEENGQQQKYLGVCRLPGPGWRHRRLDIIVVPYSEFACALLYFTGSAHFNRSMRALAKTKGMSLSEHALSTAVVRNTHGCKMGPGRVLPTPTEKDVFRLLGLPYREPAERDW</sequence>
<proteinExistence type="evidence at transcript level"/>
<evidence type="ECO:0000250" key="1"/>
<evidence type="ECO:0000250" key="2">
    <source>
        <dbReference type="UniProtKB" id="Q9UGP5"/>
    </source>
</evidence>
<evidence type="ECO:0000255" key="3">
    <source>
        <dbReference type="PROSITE-ProRule" id="PRU00033"/>
    </source>
</evidence>
<evidence type="ECO:0000256" key="4">
    <source>
        <dbReference type="SAM" id="MobiDB-lite"/>
    </source>
</evidence>
<evidence type="ECO:0000305" key="5"/>
<evidence type="ECO:0000312" key="6">
    <source>
        <dbReference type="EMBL" id="BAE02437.1"/>
    </source>
</evidence>
<organism>
    <name type="scientific">Macaca fascicularis</name>
    <name type="common">Crab-eating macaque</name>
    <name type="synonym">Cynomolgus monkey</name>
    <dbReference type="NCBI Taxonomy" id="9541"/>
    <lineage>
        <taxon>Eukaryota</taxon>
        <taxon>Metazoa</taxon>
        <taxon>Chordata</taxon>
        <taxon>Craniata</taxon>
        <taxon>Vertebrata</taxon>
        <taxon>Euteleostomi</taxon>
        <taxon>Mammalia</taxon>
        <taxon>Eutheria</taxon>
        <taxon>Euarchontoglires</taxon>
        <taxon>Primates</taxon>
        <taxon>Haplorrhini</taxon>
        <taxon>Catarrhini</taxon>
        <taxon>Cercopithecidae</taxon>
        <taxon>Cercopithecinae</taxon>
        <taxon>Macaca</taxon>
    </lineage>
</organism>
<dbReference type="EC" id="2.7.7.7" evidence="2"/>
<dbReference type="EC" id="4.2.99.-" evidence="2"/>
<dbReference type="EMBL" id="AB179386">
    <property type="protein sequence ID" value="BAE02437.1"/>
    <property type="molecule type" value="mRNA"/>
</dbReference>
<dbReference type="RefSeq" id="NP_001270218.1">
    <property type="nucleotide sequence ID" value="NM_001283289.1"/>
</dbReference>
<dbReference type="BMRB" id="Q4R380"/>
<dbReference type="SMR" id="Q4R380"/>
<dbReference type="STRING" id="9541.ENSMFAP00000022802"/>
<dbReference type="eggNOG" id="KOG2534">
    <property type="taxonomic scope" value="Eukaryota"/>
</dbReference>
<dbReference type="Proteomes" id="UP000233100">
    <property type="component" value="Unplaced"/>
</dbReference>
<dbReference type="GO" id="GO:0005634">
    <property type="term" value="C:nucleus"/>
    <property type="evidence" value="ECO:0007669"/>
    <property type="project" value="UniProtKB-SubCell"/>
</dbReference>
<dbReference type="GO" id="GO:0035861">
    <property type="term" value="C:site of double-strand break"/>
    <property type="evidence" value="ECO:0000250"/>
    <property type="project" value="UniProtKB"/>
</dbReference>
<dbReference type="GO" id="GO:0051575">
    <property type="term" value="F:5'-deoxyribose-5-phosphate lyase activity"/>
    <property type="evidence" value="ECO:0000250"/>
    <property type="project" value="UniProtKB"/>
</dbReference>
<dbReference type="GO" id="GO:0003677">
    <property type="term" value="F:DNA binding"/>
    <property type="evidence" value="ECO:0007669"/>
    <property type="project" value="UniProtKB-KW"/>
</dbReference>
<dbReference type="GO" id="GO:0003887">
    <property type="term" value="F:DNA-directed DNA polymerase activity"/>
    <property type="evidence" value="ECO:0000250"/>
    <property type="project" value="UniProtKB"/>
</dbReference>
<dbReference type="GO" id="GO:0046872">
    <property type="term" value="F:metal ion binding"/>
    <property type="evidence" value="ECO:0007669"/>
    <property type="project" value="UniProtKB-KW"/>
</dbReference>
<dbReference type="GO" id="GO:0006287">
    <property type="term" value="P:base-excision repair, gap-filling"/>
    <property type="evidence" value="ECO:0000250"/>
    <property type="project" value="UniProtKB"/>
</dbReference>
<dbReference type="GO" id="GO:0071897">
    <property type="term" value="P:DNA biosynthetic process"/>
    <property type="evidence" value="ECO:0000250"/>
    <property type="project" value="UniProtKB"/>
</dbReference>
<dbReference type="GO" id="GO:0006260">
    <property type="term" value="P:DNA replication"/>
    <property type="evidence" value="ECO:0007669"/>
    <property type="project" value="UniProtKB-KW"/>
</dbReference>
<dbReference type="GO" id="GO:0000724">
    <property type="term" value="P:double-strand break repair via homologous recombination"/>
    <property type="evidence" value="ECO:0000250"/>
    <property type="project" value="UniProtKB"/>
</dbReference>
<dbReference type="GO" id="GO:0006303">
    <property type="term" value="P:double-strand break repair via nonhomologous end joining"/>
    <property type="evidence" value="ECO:0000250"/>
    <property type="project" value="UniProtKB"/>
</dbReference>
<dbReference type="CDD" id="cd17715">
    <property type="entry name" value="BRCT_polymerase_lambda"/>
    <property type="match status" value="1"/>
</dbReference>
<dbReference type="CDD" id="cd00141">
    <property type="entry name" value="NT_POLXc"/>
    <property type="match status" value="1"/>
</dbReference>
<dbReference type="FunFam" id="3.40.50.10190:FF:000031">
    <property type="entry name" value="DNA polymerase"/>
    <property type="match status" value="1"/>
</dbReference>
<dbReference type="FunFam" id="1.10.150.110:FF:000004">
    <property type="entry name" value="DNA polymerase lambda"/>
    <property type="match status" value="1"/>
</dbReference>
<dbReference type="FunFam" id="1.10.150.20:FF:000010">
    <property type="entry name" value="DNA polymerase lambda"/>
    <property type="match status" value="1"/>
</dbReference>
<dbReference type="FunFam" id="3.30.210.10:FF:000001">
    <property type="entry name" value="DNA polymerase lambda"/>
    <property type="match status" value="1"/>
</dbReference>
<dbReference type="FunFam" id="3.30.460.10:FF:000020">
    <property type="entry name" value="DNA polymerase lambda"/>
    <property type="match status" value="1"/>
</dbReference>
<dbReference type="Gene3D" id="1.10.150.20">
    <property type="entry name" value="5' to 3' exonuclease, C-terminal subdomain"/>
    <property type="match status" value="1"/>
</dbReference>
<dbReference type="Gene3D" id="3.30.460.10">
    <property type="entry name" value="Beta Polymerase, domain 2"/>
    <property type="match status" value="1"/>
</dbReference>
<dbReference type="Gene3D" id="3.40.50.10190">
    <property type="entry name" value="BRCT domain"/>
    <property type="match status" value="1"/>
</dbReference>
<dbReference type="Gene3D" id="1.10.150.110">
    <property type="entry name" value="DNA polymerase beta, N-terminal domain-like"/>
    <property type="match status" value="1"/>
</dbReference>
<dbReference type="Gene3D" id="3.30.210.10">
    <property type="entry name" value="DNA polymerase, thumb domain"/>
    <property type="match status" value="1"/>
</dbReference>
<dbReference type="InterPro" id="IPR001357">
    <property type="entry name" value="BRCT_dom"/>
</dbReference>
<dbReference type="InterPro" id="IPR036420">
    <property type="entry name" value="BRCT_dom_sf"/>
</dbReference>
<dbReference type="InterPro" id="IPR002054">
    <property type="entry name" value="DNA-dir_DNA_pol_X"/>
</dbReference>
<dbReference type="InterPro" id="IPR019843">
    <property type="entry name" value="DNA_pol-X_BS"/>
</dbReference>
<dbReference type="InterPro" id="IPR010996">
    <property type="entry name" value="DNA_pol_b-like_N"/>
</dbReference>
<dbReference type="InterPro" id="IPR028207">
    <property type="entry name" value="DNA_pol_B_palm_palm"/>
</dbReference>
<dbReference type="InterPro" id="IPR018944">
    <property type="entry name" value="DNA_pol_lambd_fingers_domain"/>
</dbReference>
<dbReference type="InterPro" id="IPR027421">
    <property type="entry name" value="DNA_pol_lamdba_lyase_dom_sf"/>
</dbReference>
<dbReference type="InterPro" id="IPR037160">
    <property type="entry name" value="DNA_Pol_thumb_sf"/>
</dbReference>
<dbReference type="InterPro" id="IPR022312">
    <property type="entry name" value="DNA_pol_X"/>
</dbReference>
<dbReference type="InterPro" id="IPR002008">
    <property type="entry name" value="DNA_pol_X_beta-like"/>
</dbReference>
<dbReference type="InterPro" id="IPR043519">
    <property type="entry name" value="NT_sf"/>
</dbReference>
<dbReference type="InterPro" id="IPR029398">
    <property type="entry name" value="PolB_thumb"/>
</dbReference>
<dbReference type="PANTHER" id="PTHR11276:SF28">
    <property type="entry name" value="DNA POLYMERASE LAMBDA"/>
    <property type="match status" value="1"/>
</dbReference>
<dbReference type="PANTHER" id="PTHR11276">
    <property type="entry name" value="DNA POLYMERASE TYPE-X FAMILY MEMBER"/>
    <property type="match status" value="1"/>
</dbReference>
<dbReference type="Pfam" id="PF14792">
    <property type="entry name" value="DNA_pol_B_palm"/>
    <property type="match status" value="1"/>
</dbReference>
<dbReference type="Pfam" id="PF14791">
    <property type="entry name" value="DNA_pol_B_thumb"/>
    <property type="match status" value="1"/>
</dbReference>
<dbReference type="Pfam" id="PF10391">
    <property type="entry name" value="DNA_pol_lambd_f"/>
    <property type="match status" value="1"/>
</dbReference>
<dbReference type="Pfam" id="PF14716">
    <property type="entry name" value="HHH_8"/>
    <property type="match status" value="1"/>
</dbReference>
<dbReference type="PRINTS" id="PR00869">
    <property type="entry name" value="DNAPOLX"/>
</dbReference>
<dbReference type="PRINTS" id="PR00870">
    <property type="entry name" value="DNAPOLXBETA"/>
</dbReference>
<dbReference type="SMART" id="SM00483">
    <property type="entry name" value="POLXc"/>
    <property type="match status" value="1"/>
</dbReference>
<dbReference type="SUPFAM" id="SSF52113">
    <property type="entry name" value="BRCT domain"/>
    <property type="match status" value="1"/>
</dbReference>
<dbReference type="SUPFAM" id="SSF47802">
    <property type="entry name" value="DNA polymerase beta, N-terminal domain-like"/>
    <property type="match status" value="1"/>
</dbReference>
<dbReference type="SUPFAM" id="SSF81301">
    <property type="entry name" value="Nucleotidyltransferase"/>
    <property type="match status" value="1"/>
</dbReference>
<dbReference type="SUPFAM" id="SSF81585">
    <property type="entry name" value="PsbU/PolX domain-like"/>
    <property type="match status" value="1"/>
</dbReference>
<dbReference type="PROSITE" id="PS50172">
    <property type="entry name" value="BRCT"/>
    <property type="match status" value="1"/>
</dbReference>
<dbReference type="PROSITE" id="PS00522">
    <property type="entry name" value="DNA_POLYMERASE_X"/>
    <property type="match status" value="1"/>
</dbReference>
<feature type="chain" id="PRO_0000218784" description="DNA polymerase lambda">
    <location>
        <begin position="1"/>
        <end position="575"/>
    </location>
</feature>
<feature type="domain" description="BRCT" evidence="3">
    <location>
        <begin position="36"/>
        <end position="132"/>
    </location>
</feature>
<feature type="region of interest" description="Disordered" evidence="4">
    <location>
        <begin position="160"/>
        <end position="205"/>
    </location>
</feature>
<feature type="region of interest" description="DNA-binding" evidence="2">
    <location>
        <begin position="265"/>
        <end position="279"/>
    </location>
</feature>
<feature type="region of interest" description="DNA-binding" evidence="2">
    <location>
        <begin position="345"/>
        <end position="348"/>
    </location>
</feature>
<feature type="region of interest" description="Involved in primer binding" evidence="1">
    <location>
        <begin position="420"/>
        <end position="429"/>
    </location>
</feature>
<feature type="region of interest" description="DNA-binding" evidence="2">
    <location>
        <begin position="466"/>
        <end position="505"/>
    </location>
</feature>
<feature type="compositionally biased region" description="Pro residues" evidence="4">
    <location>
        <begin position="166"/>
        <end position="178"/>
    </location>
</feature>
<feature type="compositionally biased region" description="Acidic residues" evidence="4">
    <location>
        <begin position="194"/>
        <end position="203"/>
    </location>
</feature>
<feature type="active site" description="Schiff-base intermediate with DNA" evidence="2">
    <location>
        <position position="312"/>
    </location>
</feature>
<feature type="binding site" evidence="2">
    <location>
        <position position="386"/>
    </location>
    <ligand>
        <name>dCTP</name>
        <dbReference type="ChEBI" id="CHEBI:61481"/>
    </ligand>
</feature>
<feature type="binding site" evidence="2">
    <location>
        <begin position="417"/>
        <end position="420"/>
    </location>
    <ligand>
        <name>dCTP</name>
        <dbReference type="ChEBI" id="CHEBI:61481"/>
    </ligand>
</feature>
<feature type="binding site" evidence="2">
    <location>
        <begin position="426"/>
        <end position="429"/>
    </location>
    <ligand>
        <name>dCTP</name>
        <dbReference type="ChEBI" id="CHEBI:61481"/>
    </ligand>
</feature>
<feature type="binding site" evidence="2">
    <location>
        <position position="427"/>
    </location>
    <ligand>
        <name>Mn(2+)</name>
        <dbReference type="ChEBI" id="CHEBI:29035"/>
    </ligand>
</feature>
<feature type="binding site" evidence="2">
    <location>
        <position position="429"/>
    </location>
    <ligand>
        <name>Mn(2+)</name>
        <dbReference type="ChEBI" id="CHEBI:29035"/>
    </ligand>
</feature>
<feature type="binding site" evidence="2">
    <location>
        <position position="490"/>
    </location>
    <ligand>
        <name>Mn(2+)</name>
        <dbReference type="ChEBI" id="CHEBI:29035"/>
    </ligand>
</feature>
<feature type="binding site" evidence="2">
    <location>
        <position position="513"/>
    </location>
    <ligand>
        <name>dCTP</name>
        <dbReference type="ChEBI" id="CHEBI:61481"/>
    </ligand>
</feature>
<comment type="function">
    <text evidence="2">DNA polymerase that functions in several pathways of DNA repair. Involved in base excision repair (BER) responsible for repair of lesions that give rise to abasic (AP) sites in DNA. Also contributes to DNA double-strand break repair by non-homologous end joining and homologous recombination. Has both template-dependent and template-independent (terminal transferase) DNA polymerase activities. Also has a 5'-deoxyribose-5-phosphate lyase (dRP lyase) activity.</text>
</comment>
<comment type="catalytic activity">
    <reaction evidence="2">
        <text>DNA(n) + a 2'-deoxyribonucleoside 5'-triphosphate = DNA(n+1) + diphosphate</text>
        <dbReference type="Rhea" id="RHEA:22508"/>
        <dbReference type="Rhea" id="RHEA-COMP:17339"/>
        <dbReference type="Rhea" id="RHEA-COMP:17340"/>
        <dbReference type="ChEBI" id="CHEBI:33019"/>
        <dbReference type="ChEBI" id="CHEBI:61560"/>
        <dbReference type="ChEBI" id="CHEBI:173112"/>
        <dbReference type="EC" id="2.7.7.7"/>
    </reaction>
</comment>
<comment type="cofactor">
    <cofactor evidence="2">
        <name>Mn(2+)</name>
        <dbReference type="ChEBI" id="CHEBI:29035"/>
    </cofactor>
</comment>
<comment type="subunit">
    <text evidence="2">Interacts with PCNA. Interacts with PAXX; promoting POLL recruitment to double-strand breaks (DSBs) and stimulation of the end-filling activity of POLL. Interacts with XRCC4; promoting POLL recruitment to double-strand breaks (DSBs) and stimulation of the end-filling activity of POLL. Interacts with NHEJ1/XLF; promoting POLL recruitment to double-strand breaks (DSBs) and stimulation of the end-filling activity of POLL.</text>
</comment>
<comment type="subcellular location">
    <subcellularLocation>
        <location evidence="2">Nucleus</location>
    </subcellularLocation>
</comment>
<comment type="similarity">
    <text evidence="5">Belongs to the DNA polymerase type-X family.</text>
</comment>
<protein>
    <recommendedName>
        <fullName evidence="5">DNA polymerase lambda</fullName>
        <shortName evidence="5">Pol Lambda</shortName>
        <ecNumber evidence="2">2.7.7.7</ecNumber>
        <ecNumber evidence="2">4.2.99.-</ecNumber>
    </recommendedName>
</protein>